<comment type="similarity">
    <text evidence="1">Belongs to the UPF0412 family.</text>
</comment>
<accession>B7M9S5</accession>
<evidence type="ECO:0000255" key="1">
    <source>
        <dbReference type="HAMAP-Rule" id="MF_01372"/>
    </source>
</evidence>
<reference key="1">
    <citation type="journal article" date="2009" name="PLoS Genet.">
        <title>Organised genome dynamics in the Escherichia coli species results in highly diverse adaptive paths.</title>
        <authorList>
            <person name="Touchon M."/>
            <person name="Hoede C."/>
            <person name="Tenaillon O."/>
            <person name="Barbe V."/>
            <person name="Baeriswyl S."/>
            <person name="Bidet P."/>
            <person name="Bingen E."/>
            <person name="Bonacorsi S."/>
            <person name="Bouchier C."/>
            <person name="Bouvet O."/>
            <person name="Calteau A."/>
            <person name="Chiapello H."/>
            <person name="Clermont O."/>
            <person name="Cruveiller S."/>
            <person name="Danchin A."/>
            <person name="Diard M."/>
            <person name="Dossat C."/>
            <person name="Karoui M.E."/>
            <person name="Frapy E."/>
            <person name="Garry L."/>
            <person name="Ghigo J.M."/>
            <person name="Gilles A.M."/>
            <person name="Johnson J."/>
            <person name="Le Bouguenec C."/>
            <person name="Lescat M."/>
            <person name="Mangenot S."/>
            <person name="Martinez-Jehanne V."/>
            <person name="Matic I."/>
            <person name="Nassif X."/>
            <person name="Oztas S."/>
            <person name="Petit M.A."/>
            <person name="Pichon C."/>
            <person name="Rouy Z."/>
            <person name="Ruf C.S."/>
            <person name="Schneider D."/>
            <person name="Tourret J."/>
            <person name="Vacherie B."/>
            <person name="Vallenet D."/>
            <person name="Medigue C."/>
            <person name="Rocha E.P.C."/>
            <person name="Denamur E."/>
        </authorList>
    </citation>
    <scope>NUCLEOTIDE SEQUENCE [LARGE SCALE GENOMIC DNA]</scope>
    <source>
        <strain>S88 / ExPEC</strain>
    </source>
</reference>
<keyword id="KW-1185">Reference proteome</keyword>
<keyword id="KW-0732">Signal</keyword>
<gene>
    <name evidence="1" type="primary">yaaI</name>
    <name type="ordered locus">ECS88_0013</name>
</gene>
<proteinExistence type="inferred from homology"/>
<dbReference type="EMBL" id="CU928161">
    <property type="protein sequence ID" value="CAR01380.1"/>
    <property type="molecule type" value="Genomic_DNA"/>
</dbReference>
<dbReference type="RefSeq" id="WP_000843687.1">
    <property type="nucleotide sequence ID" value="NC_011742.1"/>
</dbReference>
<dbReference type="KEGG" id="ecz:ECS88_0013"/>
<dbReference type="HOGENOM" id="CLU_158661_0_0_6"/>
<dbReference type="Proteomes" id="UP000000747">
    <property type="component" value="Chromosome"/>
</dbReference>
<dbReference type="HAMAP" id="MF_01372">
    <property type="entry name" value="UPF0412"/>
    <property type="match status" value="1"/>
</dbReference>
<dbReference type="InterPro" id="IPR020240">
    <property type="entry name" value="UPF0412_YaaI"/>
</dbReference>
<dbReference type="NCBIfam" id="NF007541">
    <property type="entry name" value="PRK10154.1"/>
    <property type="match status" value="1"/>
</dbReference>
<dbReference type="Pfam" id="PF10807">
    <property type="entry name" value="DUF2541"/>
    <property type="match status" value="1"/>
</dbReference>
<sequence length="134" mass="14606">MKSVITISASLAISLMLCCTAQANDHKILGVIAMPRNETNDLALKLPVCRIVKRIQLSADHGDLQLSGASIYFKATRSASQTLNIPSEIKEEQTTDWININSDNDNKRCVSKITFSGHTVNSSDMATLKIIGDD</sequence>
<name>YAAI_ECO45</name>
<organism>
    <name type="scientific">Escherichia coli O45:K1 (strain S88 / ExPEC)</name>
    <dbReference type="NCBI Taxonomy" id="585035"/>
    <lineage>
        <taxon>Bacteria</taxon>
        <taxon>Pseudomonadati</taxon>
        <taxon>Pseudomonadota</taxon>
        <taxon>Gammaproteobacteria</taxon>
        <taxon>Enterobacterales</taxon>
        <taxon>Enterobacteriaceae</taxon>
        <taxon>Escherichia</taxon>
    </lineage>
</organism>
<protein>
    <recommendedName>
        <fullName evidence="1">UPF0412 protein YaaI</fullName>
    </recommendedName>
</protein>
<feature type="signal peptide" evidence="1">
    <location>
        <begin position="1"/>
        <end position="23"/>
    </location>
</feature>
<feature type="chain" id="PRO_1000144734" description="UPF0412 protein YaaI">
    <location>
        <begin position="24"/>
        <end position="134"/>
    </location>
</feature>